<sequence length="647" mass="70233">MSKSIGIDLGTTYSCVGHFSNNRVEIIANDQGNRTTPSYVAFTDTERLIGDAAKNQVAMNPHNTIFDAKRLIGRKFDDPEVQSDMKHWPFKVISKDGKPVLQVEYKGETKTFTPEEISSMVLMKMRETAEAYLGGKVTDAVVTVPAYFNDSQRQATKDAGLIAGLNVLRIINEPTAAAIAYGLDRSNQGESNVLIFDLGGGTFDVSLLTIEEGIFEVKATAGDTHLGGEDFDSRLVNHFIQEFKRKNKKDITGNARAVRRLRTACERAKRTLSSSAQASIEIDSLFEGIDFYTSITRARFEELCADLFRKTMEPVERVLRDSKVDKASVNEIVLVGGSTRIPRVQKLVSDFFNGKEPCKSINPDEAVAYGAAVQAAVLTGDTSEKTQDLLLLDVAPLSMGIETAGGVMTPLIKRNTTIPTKKSEIFSTYSDNQPGVLIQVFEGERARTKDCNLLGKFELSGIPPAPRGVPQIEVTFDVDANGILNVSALEKGTGKTQKITITNDKGRLSKEEIDRMVAEAEKYKAEDEAESGRIQAKNHLESYAYSLRNSLDDPNLKDKVDASDKETVDKAVKETIEWLDSNTTAAKDEFEAKQKELESVANPIMAKIYQAGGAPGGMPGAAPGAAPGAAPGAAPGGDNGPEVEEVD</sequence>
<keyword id="KW-0007">Acetylation</keyword>
<keyword id="KW-0067">ATP-binding</keyword>
<keyword id="KW-0963">Cytoplasm</keyword>
<keyword id="KW-0547">Nucleotide-binding</keyword>
<keyword id="KW-0597">Phosphoprotein</keyword>
<keyword id="KW-1185">Reference proteome</keyword>
<keyword id="KW-0346">Stress response</keyword>
<accession>O59855</accession>
<feature type="initiator methionine" description="Removed" evidence="1">
    <location>
        <position position="1"/>
    </location>
</feature>
<feature type="chain" id="PRO_0000078380" description="Probable heat shock protein ssa2">
    <location>
        <begin position="2"/>
        <end position="647"/>
    </location>
</feature>
<feature type="region of interest" description="Disordered" evidence="2">
    <location>
        <begin position="611"/>
        <end position="647"/>
    </location>
</feature>
<feature type="compositionally biased region" description="Low complexity" evidence="2">
    <location>
        <begin position="620"/>
        <end position="633"/>
    </location>
</feature>
<feature type="modified residue" description="N-acetylserine" evidence="1">
    <location>
        <position position="2"/>
    </location>
</feature>
<feature type="modified residue" description="Phosphothreonine" evidence="3">
    <location>
        <position position="36"/>
    </location>
</feature>
<feature type="modified residue" description="Phosphothreonine" evidence="3">
    <location>
        <position position="339"/>
    </location>
</feature>
<feature type="modified residue" description="Phosphothreonine" evidence="3">
    <location>
        <position position="417"/>
    </location>
</feature>
<feature type="modified residue" description="Phosphoserine" evidence="3">
    <location>
        <position position="546"/>
    </location>
</feature>
<proteinExistence type="evidence at protein level"/>
<organism>
    <name type="scientific">Schizosaccharomyces pombe (strain 972 / ATCC 24843)</name>
    <name type="common">Fission yeast</name>
    <dbReference type="NCBI Taxonomy" id="284812"/>
    <lineage>
        <taxon>Eukaryota</taxon>
        <taxon>Fungi</taxon>
        <taxon>Dikarya</taxon>
        <taxon>Ascomycota</taxon>
        <taxon>Taphrinomycotina</taxon>
        <taxon>Schizosaccharomycetes</taxon>
        <taxon>Schizosaccharomycetales</taxon>
        <taxon>Schizosaccharomycetaceae</taxon>
        <taxon>Schizosaccharomyces</taxon>
    </lineage>
</organism>
<dbReference type="EMBL" id="AB012387">
    <property type="protein sequence ID" value="BAA25322.1"/>
    <property type="molecule type" value="mRNA"/>
</dbReference>
<dbReference type="EMBL" id="CU329672">
    <property type="protein sequence ID" value="CAA20787.1"/>
    <property type="molecule type" value="Genomic_DNA"/>
</dbReference>
<dbReference type="PIR" id="T41121">
    <property type="entry name" value="T41121"/>
</dbReference>
<dbReference type="RefSeq" id="NP_588421.1">
    <property type="nucleotide sequence ID" value="NM_001023412.2"/>
</dbReference>
<dbReference type="SMR" id="O59855"/>
<dbReference type="BioGRID" id="275795">
    <property type="interactions" value="25"/>
</dbReference>
<dbReference type="FunCoup" id="O59855">
    <property type="interactions" value="496"/>
</dbReference>
<dbReference type="IntAct" id="O59855">
    <property type="interactions" value="3"/>
</dbReference>
<dbReference type="MINT" id="O59855"/>
<dbReference type="STRING" id="284812.O59855"/>
<dbReference type="iPTMnet" id="O59855"/>
<dbReference type="PaxDb" id="4896-SPCC1739.13.1"/>
<dbReference type="EnsemblFungi" id="SPCC1739.13.1">
    <property type="protein sequence ID" value="SPCC1739.13.1:pep"/>
    <property type="gene ID" value="SPCC1739.13"/>
</dbReference>
<dbReference type="GeneID" id="2539225"/>
<dbReference type="KEGG" id="spo:2539225"/>
<dbReference type="PomBase" id="SPCC1739.13">
    <property type="gene designation" value="ssa2"/>
</dbReference>
<dbReference type="VEuPathDB" id="FungiDB:SPCC1739.13"/>
<dbReference type="eggNOG" id="KOG0101">
    <property type="taxonomic scope" value="Eukaryota"/>
</dbReference>
<dbReference type="HOGENOM" id="CLU_005965_7_0_1"/>
<dbReference type="InParanoid" id="O59855"/>
<dbReference type="OMA" id="SYAYNIK"/>
<dbReference type="PhylomeDB" id="O59855"/>
<dbReference type="Reactome" id="R-SPO-3371453">
    <property type="pathway name" value="Regulation of HSF1-mediated heat shock response"/>
</dbReference>
<dbReference type="Reactome" id="R-SPO-3371497">
    <property type="pathway name" value="HSP90 chaperone cycle for steroid hormone receptors (SHR) in the presence of ligand"/>
</dbReference>
<dbReference type="Reactome" id="R-SPO-3371571">
    <property type="pathway name" value="HSF1-dependent transactivation"/>
</dbReference>
<dbReference type="Reactome" id="R-SPO-6798695">
    <property type="pathway name" value="Neutrophil degranulation"/>
</dbReference>
<dbReference type="Reactome" id="R-SPO-72163">
    <property type="pathway name" value="mRNA Splicing - Major Pathway"/>
</dbReference>
<dbReference type="Reactome" id="R-SPO-8856828">
    <property type="pathway name" value="Clathrin-mediated endocytosis"/>
</dbReference>
<dbReference type="Reactome" id="R-SPO-8876725">
    <property type="pathway name" value="Protein methylation"/>
</dbReference>
<dbReference type="Reactome" id="R-SPO-9841251">
    <property type="pathway name" value="Mitochondrial unfolded protein response (UPRmt)"/>
</dbReference>
<dbReference type="PRO" id="PR:O59855"/>
<dbReference type="Proteomes" id="UP000002485">
    <property type="component" value="Chromosome III"/>
</dbReference>
<dbReference type="GO" id="GO:0005737">
    <property type="term" value="C:cytoplasm"/>
    <property type="evidence" value="ECO:0000314"/>
    <property type="project" value="PomBase"/>
</dbReference>
<dbReference type="GO" id="GO:0005829">
    <property type="term" value="C:cytosol"/>
    <property type="evidence" value="ECO:0007005"/>
    <property type="project" value="PomBase"/>
</dbReference>
<dbReference type="GO" id="GO:0140602">
    <property type="term" value="C:nucleolar peripheral inclusion body"/>
    <property type="evidence" value="ECO:0000314"/>
    <property type="project" value="PomBase"/>
</dbReference>
<dbReference type="GO" id="GO:0005634">
    <property type="term" value="C:nucleus"/>
    <property type="evidence" value="ECO:0000314"/>
    <property type="project" value="PomBase"/>
</dbReference>
<dbReference type="GO" id="GO:0005886">
    <property type="term" value="C:plasma membrane"/>
    <property type="evidence" value="ECO:0000318"/>
    <property type="project" value="GO_Central"/>
</dbReference>
<dbReference type="GO" id="GO:0071014">
    <property type="term" value="C:post-mRNA release spliceosomal complex"/>
    <property type="evidence" value="ECO:0000314"/>
    <property type="project" value="PomBase"/>
</dbReference>
<dbReference type="GO" id="GO:0140453">
    <property type="term" value="C:protein aggregate center"/>
    <property type="evidence" value="ECO:0000314"/>
    <property type="project" value="PomBase"/>
</dbReference>
<dbReference type="GO" id="GO:0005524">
    <property type="term" value="F:ATP binding"/>
    <property type="evidence" value="ECO:0007669"/>
    <property type="project" value="UniProtKB-KW"/>
</dbReference>
<dbReference type="GO" id="GO:0016887">
    <property type="term" value="F:ATP hydrolysis activity"/>
    <property type="evidence" value="ECO:0000318"/>
    <property type="project" value="GO_Central"/>
</dbReference>
<dbReference type="GO" id="GO:0140662">
    <property type="term" value="F:ATP-dependent protein folding chaperone"/>
    <property type="evidence" value="ECO:0007669"/>
    <property type="project" value="InterPro"/>
</dbReference>
<dbReference type="GO" id="GO:0031072">
    <property type="term" value="F:heat shock protein binding"/>
    <property type="evidence" value="ECO:0000318"/>
    <property type="project" value="GO_Central"/>
</dbReference>
<dbReference type="GO" id="GO:0044183">
    <property type="term" value="F:protein folding chaperone"/>
    <property type="evidence" value="ECO:0000318"/>
    <property type="project" value="GO_Central"/>
</dbReference>
<dbReference type="GO" id="GO:0051082">
    <property type="term" value="F:unfolded protein binding"/>
    <property type="evidence" value="ECO:0000266"/>
    <property type="project" value="PomBase"/>
</dbReference>
<dbReference type="GO" id="GO:0034605">
    <property type="term" value="P:cellular response to heat"/>
    <property type="evidence" value="ECO:0000315"/>
    <property type="project" value="PomBase"/>
</dbReference>
<dbReference type="GO" id="GO:0051085">
    <property type="term" value="P:chaperone cofactor-dependent protein refolding"/>
    <property type="evidence" value="ECO:0000318"/>
    <property type="project" value="GO_Central"/>
</dbReference>
<dbReference type="GO" id="GO:0042026">
    <property type="term" value="P:protein refolding"/>
    <property type="evidence" value="ECO:0000318"/>
    <property type="project" value="GO_Central"/>
</dbReference>
<dbReference type="CDD" id="cd10233">
    <property type="entry name" value="ASKHA_NBD_HSP70_HSPA1"/>
    <property type="match status" value="1"/>
</dbReference>
<dbReference type="FunFam" id="2.60.34.10:FF:000002">
    <property type="entry name" value="Heat shock 70 kDa"/>
    <property type="match status" value="1"/>
</dbReference>
<dbReference type="FunFam" id="3.30.420.40:FF:000172">
    <property type="entry name" value="Heat shock 70 kDa protein"/>
    <property type="match status" value="2"/>
</dbReference>
<dbReference type="FunFam" id="3.30.30.30:FF:000001">
    <property type="entry name" value="heat shock 70 kDa protein-like"/>
    <property type="match status" value="1"/>
</dbReference>
<dbReference type="FunFam" id="3.90.640.10:FF:000134">
    <property type="entry name" value="Heat shock cognate 71 kDa protein"/>
    <property type="match status" value="1"/>
</dbReference>
<dbReference type="FunFam" id="1.20.1270.10:FF:000021">
    <property type="entry name" value="Heat shock protein 70"/>
    <property type="match status" value="1"/>
</dbReference>
<dbReference type="FunFam" id="3.30.420.40:FF:000026">
    <property type="entry name" value="Heat shock protein 70"/>
    <property type="match status" value="1"/>
</dbReference>
<dbReference type="Gene3D" id="1.20.1270.10">
    <property type="match status" value="1"/>
</dbReference>
<dbReference type="Gene3D" id="3.30.30.30">
    <property type="match status" value="1"/>
</dbReference>
<dbReference type="Gene3D" id="3.30.420.40">
    <property type="match status" value="2"/>
</dbReference>
<dbReference type="Gene3D" id="3.90.640.10">
    <property type="entry name" value="Actin, Chain A, domain 4"/>
    <property type="match status" value="1"/>
</dbReference>
<dbReference type="Gene3D" id="2.60.34.10">
    <property type="entry name" value="Substrate Binding Domain Of DNAk, Chain A, domain 1"/>
    <property type="match status" value="1"/>
</dbReference>
<dbReference type="InterPro" id="IPR043129">
    <property type="entry name" value="ATPase_NBD"/>
</dbReference>
<dbReference type="InterPro" id="IPR018181">
    <property type="entry name" value="Heat_shock_70_CS"/>
</dbReference>
<dbReference type="InterPro" id="IPR029048">
    <property type="entry name" value="HSP70_C_sf"/>
</dbReference>
<dbReference type="InterPro" id="IPR029047">
    <property type="entry name" value="HSP70_peptide-bd_sf"/>
</dbReference>
<dbReference type="InterPro" id="IPR013126">
    <property type="entry name" value="Hsp_70_fam"/>
</dbReference>
<dbReference type="NCBIfam" id="NF001413">
    <property type="entry name" value="PRK00290.1"/>
    <property type="match status" value="1"/>
</dbReference>
<dbReference type="PANTHER" id="PTHR19375">
    <property type="entry name" value="HEAT SHOCK PROTEIN 70KDA"/>
    <property type="match status" value="1"/>
</dbReference>
<dbReference type="Pfam" id="PF00012">
    <property type="entry name" value="HSP70"/>
    <property type="match status" value="1"/>
</dbReference>
<dbReference type="PRINTS" id="PR00301">
    <property type="entry name" value="HEATSHOCK70"/>
</dbReference>
<dbReference type="SUPFAM" id="SSF53067">
    <property type="entry name" value="Actin-like ATPase domain"/>
    <property type="match status" value="2"/>
</dbReference>
<dbReference type="SUPFAM" id="SSF100934">
    <property type="entry name" value="Heat shock protein 70kD (HSP70), C-terminal subdomain"/>
    <property type="match status" value="1"/>
</dbReference>
<dbReference type="SUPFAM" id="SSF100920">
    <property type="entry name" value="Heat shock protein 70kD (HSP70), peptide-binding domain"/>
    <property type="match status" value="1"/>
</dbReference>
<dbReference type="PROSITE" id="PS00297">
    <property type="entry name" value="HSP70_1"/>
    <property type="match status" value="1"/>
</dbReference>
<dbReference type="PROSITE" id="PS00329">
    <property type="entry name" value="HSP70_2"/>
    <property type="match status" value="1"/>
</dbReference>
<dbReference type="PROSITE" id="PS01036">
    <property type="entry name" value="HSP70_3"/>
    <property type="match status" value="1"/>
</dbReference>
<name>HSP72_SCHPO</name>
<comment type="subcellular location">
    <subcellularLocation>
        <location evidence="4">Cytoplasm</location>
    </subcellularLocation>
</comment>
<comment type="similarity">
    <text evidence="4">Belongs to the heat shock protein 70 family.</text>
</comment>
<reference key="1">
    <citation type="submission" date="1998-03" db="EMBL/GenBank/DDBJ databases">
        <title>S.pombe heat shock protein of HSP70 family.</title>
        <authorList>
            <person name="Kawamukai M."/>
        </authorList>
    </citation>
    <scope>NUCLEOTIDE SEQUENCE [MRNA]</scope>
</reference>
<reference key="2">
    <citation type="journal article" date="2002" name="Nature">
        <title>The genome sequence of Schizosaccharomyces pombe.</title>
        <authorList>
            <person name="Wood V."/>
            <person name="Gwilliam R."/>
            <person name="Rajandream M.A."/>
            <person name="Lyne M.H."/>
            <person name="Lyne R."/>
            <person name="Stewart A."/>
            <person name="Sgouros J.G."/>
            <person name="Peat N."/>
            <person name="Hayles J."/>
            <person name="Baker S.G."/>
            <person name="Basham D."/>
            <person name="Bowman S."/>
            <person name="Brooks K."/>
            <person name="Brown D."/>
            <person name="Brown S."/>
            <person name="Chillingworth T."/>
            <person name="Churcher C.M."/>
            <person name="Collins M."/>
            <person name="Connor R."/>
            <person name="Cronin A."/>
            <person name="Davis P."/>
            <person name="Feltwell T."/>
            <person name="Fraser A."/>
            <person name="Gentles S."/>
            <person name="Goble A."/>
            <person name="Hamlin N."/>
            <person name="Harris D.E."/>
            <person name="Hidalgo J."/>
            <person name="Hodgson G."/>
            <person name="Holroyd S."/>
            <person name="Hornsby T."/>
            <person name="Howarth S."/>
            <person name="Huckle E.J."/>
            <person name="Hunt S."/>
            <person name="Jagels K."/>
            <person name="James K.D."/>
            <person name="Jones L."/>
            <person name="Jones M."/>
            <person name="Leather S."/>
            <person name="McDonald S."/>
            <person name="McLean J."/>
            <person name="Mooney P."/>
            <person name="Moule S."/>
            <person name="Mungall K.L."/>
            <person name="Murphy L.D."/>
            <person name="Niblett D."/>
            <person name="Odell C."/>
            <person name="Oliver K."/>
            <person name="O'Neil S."/>
            <person name="Pearson D."/>
            <person name="Quail M.A."/>
            <person name="Rabbinowitsch E."/>
            <person name="Rutherford K.M."/>
            <person name="Rutter S."/>
            <person name="Saunders D."/>
            <person name="Seeger K."/>
            <person name="Sharp S."/>
            <person name="Skelton J."/>
            <person name="Simmonds M.N."/>
            <person name="Squares R."/>
            <person name="Squares S."/>
            <person name="Stevens K."/>
            <person name="Taylor K."/>
            <person name="Taylor R.G."/>
            <person name="Tivey A."/>
            <person name="Walsh S.V."/>
            <person name="Warren T."/>
            <person name="Whitehead S."/>
            <person name="Woodward J.R."/>
            <person name="Volckaert G."/>
            <person name="Aert R."/>
            <person name="Robben J."/>
            <person name="Grymonprez B."/>
            <person name="Weltjens I."/>
            <person name="Vanstreels E."/>
            <person name="Rieger M."/>
            <person name="Schaefer M."/>
            <person name="Mueller-Auer S."/>
            <person name="Gabel C."/>
            <person name="Fuchs M."/>
            <person name="Duesterhoeft A."/>
            <person name="Fritzc C."/>
            <person name="Holzer E."/>
            <person name="Moestl D."/>
            <person name="Hilbert H."/>
            <person name="Borzym K."/>
            <person name="Langer I."/>
            <person name="Beck A."/>
            <person name="Lehrach H."/>
            <person name="Reinhardt R."/>
            <person name="Pohl T.M."/>
            <person name="Eger P."/>
            <person name="Zimmermann W."/>
            <person name="Wedler H."/>
            <person name="Wambutt R."/>
            <person name="Purnelle B."/>
            <person name="Goffeau A."/>
            <person name="Cadieu E."/>
            <person name="Dreano S."/>
            <person name="Gloux S."/>
            <person name="Lelaure V."/>
            <person name="Mottier S."/>
            <person name="Galibert F."/>
            <person name="Aves S.J."/>
            <person name="Xiang Z."/>
            <person name="Hunt C."/>
            <person name="Moore K."/>
            <person name="Hurst S.M."/>
            <person name="Lucas M."/>
            <person name="Rochet M."/>
            <person name="Gaillardin C."/>
            <person name="Tallada V.A."/>
            <person name="Garzon A."/>
            <person name="Thode G."/>
            <person name="Daga R.R."/>
            <person name="Cruzado L."/>
            <person name="Jimenez J."/>
            <person name="Sanchez M."/>
            <person name="del Rey F."/>
            <person name="Benito J."/>
            <person name="Dominguez A."/>
            <person name="Revuelta J.L."/>
            <person name="Moreno S."/>
            <person name="Armstrong J."/>
            <person name="Forsburg S.L."/>
            <person name="Cerutti L."/>
            <person name="Lowe T."/>
            <person name="McCombie W.R."/>
            <person name="Paulsen I."/>
            <person name="Potashkin J."/>
            <person name="Shpakovski G.V."/>
            <person name="Ussery D."/>
            <person name="Barrell B.G."/>
            <person name="Nurse P."/>
        </authorList>
    </citation>
    <scope>NUCLEOTIDE SEQUENCE [LARGE SCALE GENOMIC DNA]</scope>
    <source>
        <strain>972 / ATCC 24843</strain>
    </source>
</reference>
<reference key="3">
    <citation type="journal article" date="2008" name="J. Proteome Res.">
        <title>Phosphoproteome analysis of fission yeast.</title>
        <authorList>
            <person name="Wilson-Grady J.T."/>
            <person name="Villen J."/>
            <person name="Gygi S.P."/>
        </authorList>
    </citation>
    <scope>PHOSPHORYLATION [LARGE SCALE ANALYSIS] AT THR-36; THR-339; THR-417 AND SER-546</scope>
    <scope>IDENTIFICATION BY MASS SPECTROMETRY</scope>
</reference>
<gene>
    <name type="primary">ssa2</name>
    <name type="ORF">SPCC1739.13</name>
</gene>
<evidence type="ECO:0000250" key="1"/>
<evidence type="ECO:0000256" key="2">
    <source>
        <dbReference type="SAM" id="MobiDB-lite"/>
    </source>
</evidence>
<evidence type="ECO:0000269" key="3">
    <source>
    </source>
</evidence>
<evidence type="ECO:0000305" key="4"/>
<protein>
    <recommendedName>
        <fullName>Probable heat shock protein ssa2</fullName>
    </recommendedName>
</protein>